<protein>
    <recommendedName>
        <fullName evidence="2">Formamidopyrimidine-DNA glycosylase</fullName>
        <shortName evidence="2">Fapy-DNA glycosylase</shortName>
        <ecNumber evidence="2">3.2.2.23</ecNumber>
    </recommendedName>
    <alternativeName>
        <fullName evidence="2">DNA-(apurinic or apyrimidinic site) lyase MutM</fullName>
        <shortName evidence="2">AP lyase MutM</shortName>
        <ecNumber evidence="2">4.2.99.18</ecNumber>
    </alternativeName>
</protein>
<feature type="initiator methionine" description="Removed" evidence="1">
    <location>
        <position position="1"/>
    </location>
</feature>
<feature type="chain" id="PRO_1000008682" description="Formamidopyrimidine-DNA glycosylase">
    <location>
        <begin position="2"/>
        <end position="275"/>
    </location>
</feature>
<feature type="zinc finger region" description="FPG-type" evidence="2">
    <location>
        <begin position="241"/>
        <end position="275"/>
    </location>
</feature>
<feature type="active site" description="Schiff-base intermediate with DNA" evidence="2">
    <location>
        <position position="2"/>
    </location>
</feature>
<feature type="active site" description="Proton donor" evidence="2">
    <location>
        <position position="3"/>
    </location>
</feature>
<feature type="active site" description="Proton donor; for beta-elimination activity" evidence="2">
    <location>
        <position position="58"/>
    </location>
</feature>
<feature type="active site" description="Proton donor; for delta-elimination activity" evidence="2">
    <location>
        <position position="265"/>
    </location>
</feature>
<feature type="binding site" evidence="2">
    <location>
        <position position="93"/>
    </location>
    <ligand>
        <name>DNA</name>
        <dbReference type="ChEBI" id="CHEBI:16991"/>
    </ligand>
</feature>
<feature type="binding site" evidence="2">
    <location>
        <position position="111"/>
    </location>
    <ligand>
        <name>DNA</name>
        <dbReference type="ChEBI" id="CHEBI:16991"/>
    </ligand>
</feature>
<feature type="binding site" evidence="2">
    <location>
        <position position="156"/>
    </location>
    <ligand>
        <name>DNA</name>
        <dbReference type="ChEBI" id="CHEBI:16991"/>
    </ligand>
</feature>
<evidence type="ECO:0000250" key="1"/>
<evidence type="ECO:0000255" key="2">
    <source>
        <dbReference type="HAMAP-Rule" id="MF_00103"/>
    </source>
</evidence>
<dbReference type="EC" id="3.2.2.23" evidence="2"/>
<dbReference type="EC" id="4.2.99.18" evidence="2"/>
<dbReference type="EMBL" id="CP000458">
    <property type="protein sequence ID" value="ABK09548.1"/>
    <property type="molecule type" value="Genomic_DNA"/>
</dbReference>
<dbReference type="RefSeq" id="WP_011546243.1">
    <property type="nucleotide sequence ID" value="NC_008542.1"/>
</dbReference>
<dbReference type="SMR" id="A0KAM1"/>
<dbReference type="GeneID" id="83049593"/>
<dbReference type="KEGG" id="bch:Bcen2424_2798"/>
<dbReference type="HOGENOM" id="CLU_038423_1_1_4"/>
<dbReference type="GO" id="GO:0034039">
    <property type="term" value="F:8-oxo-7,8-dihydroguanine DNA N-glycosylase activity"/>
    <property type="evidence" value="ECO:0007669"/>
    <property type="project" value="TreeGrafter"/>
</dbReference>
<dbReference type="GO" id="GO:0140078">
    <property type="term" value="F:class I DNA-(apurinic or apyrimidinic site) endonuclease activity"/>
    <property type="evidence" value="ECO:0007669"/>
    <property type="project" value="UniProtKB-EC"/>
</dbReference>
<dbReference type="GO" id="GO:0003684">
    <property type="term" value="F:damaged DNA binding"/>
    <property type="evidence" value="ECO:0007669"/>
    <property type="project" value="InterPro"/>
</dbReference>
<dbReference type="GO" id="GO:0008270">
    <property type="term" value="F:zinc ion binding"/>
    <property type="evidence" value="ECO:0007669"/>
    <property type="project" value="UniProtKB-UniRule"/>
</dbReference>
<dbReference type="GO" id="GO:0006284">
    <property type="term" value="P:base-excision repair"/>
    <property type="evidence" value="ECO:0007669"/>
    <property type="project" value="InterPro"/>
</dbReference>
<dbReference type="CDD" id="cd08966">
    <property type="entry name" value="EcFpg-like_N"/>
    <property type="match status" value="1"/>
</dbReference>
<dbReference type="FunFam" id="1.10.8.50:FF:000003">
    <property type="entry name" value="Formamidopyrimidine-DNA glycosylase"/>
    <property type="match status" value="1"/>
</dbReference>
<dbReference type="Gene3D" id="1.10.8.50">
    <property type="match status" value="1"/>
</dbReference>
<dbReference type="Gene3D" id="3.20.190.10">
    <property type="entry name" value="MutM-like, N-terminal"/>
    <property type="match status" value="1"/>
</dbReference>
<dbReference type="HAMAP" id="MF_00103">
    <property type="entry name" value="Fapy_DNA_glycosyl"/>
    <property type="match status" value="1"/>
</dbReference>
<dbReference type="InterPro" id="IPR015886">
    <property type="entry name" value="DNA_glyclase/AP_lyase_DNA-bd"/>
</dbReference>
<dbReference type="InterPro" id="IPR015887">
    <property type="entry name" value="DNA_glyclase_Znf_dom_DNA_BS"/>
</dbReference>
<dbReference type="InterPro" id="IPR020629">
    <property type="entry name" value="Formamido-pyr_DNA_Glyclase"/>
</dbReference>
<dbReference type="InterPro" id="IPR012319">
    <property type="entry name" value="FPG_cat"/>
</dbReference>
<dbReference type="InterPro" id="IPR035937">
    <property type="entry name" value="MutM-like_N-ter"/>
</dbReference>
<dbReference type="InterPro" id="IPR010979">
    <property type="entry name" value="Ribosomal_uS13-like_H2TH"/>
</dbReference>
<dbReference type="InterPro" id="IPR000214">
    <property type="entry name" value="Znf_DNA_glyclase/AP_lyase"/>
</dbReference>
<dbReference type="InterPro" id="IPR010663">
    <property type="entry name" value="Znf_FPG/IleRS"/>
</dbReference>
<dbReference type="NCBIfam" id="TIGR00577">
    <property type="entry name" value="fpg"/>
    <property type="match status" value="1"/>
</dbReference>
<dbReference type="NCBIfam" id="NF002211">
    <property type="entry name" value="PRK01103.1"/>
    <property type="match status" value="1"/>
</dbReference>
<dbReference type="PANTHER" id="PTHR22993">
    <property type="entry name" value="FORMAMIDOPYRIMIDINE-DNA GLYCOSYLASE"/>
    <property type="match status" value="1"/>
</dbReference>
<dbReference type="PANTHER" id="PTHR22993:SF9">
    <property type="entry name" value="FORMAMIDOPYRIMIDINE-DNA GLYCOSYLASE"/>
    <property type="match status" value="1"/>
</dbReference>
<dbReference type="Pfam" id="PF01149">
    <property type="entry name" value="Fapy_DNA_glyco"/>
    <property type="match status" value="1"/>
</dbReference>
<dbReference type="Pfam" id="PF06831">
    <property type="entry name" value="H2TH"/>
    <property type="match status" value="1"/>
</dbReference>
<dbReference type="Pfam" id="PF06827">
    <property type="entry name" value="zf-FPG_IleRS"/>
    <property type="match status" value="1"/>
</dbReference>
<dbReference type="SMART" id="SM00898">
    <property type="entry name" value="Fapy_DNA_glyco"/>
    <property type="match status" value="1"/>
</dbReference>
<dbReference type="SMART" id="SM01232">
    <property type="entry name" value="H2TH"/>
    <property type="match status" value="1"/>
</dbReference>
<dbReference type="SUPFAM" id="SSF57716">
    <property type="entry name" value="Glucocorticoid receptor-like (DNA-binding domain)"/>
    <property type="match status" value="1"/>
</dbReference>
<dbReference type="SUPFAM" id="SSF81624">
    <property type="entry name" value="N-terminal domain of MutM-like DNA repair proteins"/>
    <property type="match status" value="1"/>
</dbReference>
<dbReference type="SUPFAM" id="SSF46946">
    <property type="entry name" value="S13-like H2TH domain"/>
    <property type="match status" value="1"/>
</dbReference>
<dbReference type="PROSITE" id="PS51068">
    <property type="entry name" value="FPG_CAT"/>
    <property type="match status" value="1"/>
</dbReference>
<dbReference type="PROSITE" id="PS01242">
    <property type="entry name" value="ZF_FPG_1"/>
    <property type="match status" value="1"/>
</dbReference>
<dbReference type="PROSITE" id="PS51066">
    <property type="entry name" value="ZF_FPG_2"/>
    <property type="match status" value="1"/>
</dbReference>
<gene>
    <name evidence="2" type="primary">mutM</name>
    <name evidence="2" type="synonym">fpg</name>
    <name type="ordered locus">Bcen2424_2798</name>
</gene>
<comment type="function">
    <text evidence="2">Involved in base excision repair of DNA damaged by oxidation or by mutagenic agents. Acts as a DNA glycosylase that recognizes and removes damaged bases. Has a preference for oxidized purines, such as 7,8-dihydro-8-oxoguanine (8-oxoG). Has AP (apurinic/apyrimidinic) lyase activity and introduces nicks in the DNA strand. Cleaves the DNA backbone by beta-delta elimination to generate a single-strand break at the site of the removed base with both 3'- and 5'-phosphates.</text>
</comment>
<comment type="catalytic activity">
    <reaction evidence="2">
        <text>Hydrolysis of DNA containing ring-opened 7-methylguanine residues, releasing 2,6-diamino-4-hydroxy-5-(N-methyl)formamidopyrimidine.</text>
        <dbReference type="EC" id="3.2.2.23"/>
    </reaction>
</comment>
<comment type="catalytic activity">
    <reaction evidence="2">
        <text>2'-deoxyribonucleotide-(2'-deoxyribose 5'-phosphate)-2'-deoxyribonucleotide-DNA = a 3'-end 2'-deoxyribonucleotide-(2,3-dehydro-2,3-deoxyribose 5'-phosphate)-DNA + a 5'-end 5'-phospho-2'-deoxyribonucleoside-DNA + H(+)</text>
        <dbReference type="Rhea" id="RHEA:66592"/>
        <dbReference type="Rhea" id="RHEA-COMP:13180"/>
        <dbReference type="Rhea" id="RHEA-COMP:16897"/>
        <dbReference type="Rhea" id="RHEA-COMP:17067"/>
        <dbReference type="ChEBI" id="CHEBI:15378"/>
        <dbReference type="ChEBI" id="CHEBI:136412"/>
        <dbReference type="ChEBI" id="CHEBI:157695"/>
        <dbReference type="ChEBI" id="CHEBI:167181"/>
        <dbReference type="EC" id="4.2.99.18"/>
    </reaction>
</comment>
<comment type="cofactor">
    <cofactor evidence="2">
        <name>Zn(2+)</name>
        <dbReference type="ChEBI" id="CHEBI:29105"/>
    </cofactor>
    <text evidence="2">Binds 1 zinc ion per subunit.</text>
</comment>
<comment type="subunit">
    <text evidence="2">Monomer.</text>
</comment>
<comment type="similarity">
    <text evidence="2">Belongs to the FPG family.</text>
</comment>
<organism>
    <name type="scientific">Burkholderia cenocepacia (strain HI2424)</name>
    <dbReference type="NCBI Taxonomy" id="331272"/>
    <lineage>
        <taxon>Bacteria</taxon>
        <taxon>Pseudomonadati</taxon>
        <taxon>Pseudomonadota</taxon>
        <taxon>Betaproteobacteria</taxon>
        <taxon>Burkholderiales</taxon>
        <taxon>Burkholderiaceae</taxon>
        <taxon>Burkholderia</taxon>
        <taxon>Burkholderia cepacia complex</taxon>
    </lineage>
</organism>
<keyword id="KW-0227">DNA damage</keyword>
<keyword id="KW-0234">DNA repair</keyword>
<keyword id="KW-0238">DNA-binding</keyword>
<keyword id="KW-0326">Glycosidase</keyword>
<keyword id="KW-0378">Hydrolase</keyword>
<keyword id="KW-0456">Lyase</keyword>
<keyword id="KW-0479">Metal-binding</keyword>
<keyword id="KW-0511">Multifunctional enzyme</keyword>
<keyword id="KW-0862">Zinc</keyword>
<keyword id="KW-0863">Zinc-finger</keyword>
<name>FPG_BURCH</name>
<reference key="1">
    <citation type="submission" date="2006-08" db="EMBL/GenBank/DDBJ databases">
        <title>Complete sequence of chromosome 1 of Burkholderia cenocepacia HI2424.</title>
        <authorList>
            <person name="Copeland A."/>
            <person name="Lucas S."/>
            <person name="Lapidus A."/>
            <person name="Barry K."/>
            <person name="Detter J.C."/>
            <person name="Glavina del Rio T."/>
            <person name="Hammon N."/>
            <person name="Israni S."/>
            <person name="Pitluck S."/>
            <person name="Chain P."/>
            <person name="Malfatti S."/>
            <person name="Shin M."/>
            <person name="Vergez L."/>
            <person name="Schmutz J."/>
            <person name="Larimer F."/>
            <person name="Land M."/>
            <person name="Hauser L."/>
            <person name="Kyrpides N."/>
            <person name="Kim E."/>
            <person name="LiPuma J.J."/>
            <person name="Gonzalez C.F."/>
            <person name="Konstantinidis K."/>
            <person name="Tiedje J.M."/>
            <person name="Richardson P."/>
        </authorList>
    </citation>
    <scope>NUCLEOTIDE SEQUENCE [LARGE SCALE GENOMIC DNA]</scope>
    <source>
        <strain>HI2424</strain>
    </source>
</reference>
<accession>A0KAM1</accession>
<proteinExistence type="inferred from homology"/>
<sequence>MPELPEVEVTRRGIEPFVAGRRVERVDVRTAMLRWPVPAGLAEQLRAREVLAVERRGKYLLFEVDAGWFIVHLGMTGTLRVLPAAGVPVAAKHDHIDWIFDEFVLRFRDPRRFGAVLWHPREAGDVHAHPLLASLGVEPFSPAFTGALLHARTRGRTVSVKQALLAGDMVVGVGNIYASESLFRAGIRPTTAAGKVSLPRYERLADAVRATLADAIERGGSTLRDFVGSNGESGYFQLDCFVYDRAGQPCRVCGTPVRQIVQGQRSTYFCPTCQR</sequence>